<comment type="function">
    <text evidence="1">Cell wall formation.</text>
</comment>
<comment type="catalytic activity">
    <reaction evidence="1">
        <text>UDP-N-acetyl-alpha-D-muramate + NADP(+) = UDP-N-acetyl-3-O-(1-carboxyvinyl)-alpha-D-glucosamine + NADPH + H(+)</text>
        <dbReference type="Rhea" id="RHEA:12248"/>
        <dbReference type="ChEBI" id="CHEBI:15378"/>
        <dbReference type="ChEBI" id="CHEBI:57783"/>
        <dbReference type="ChEBI" id="CHEBI:58349"/>
        <dbReference type="ChEBI" id="CHEBI:68483"/>
        <dbReference type="ChEBI" id="CHEBI:70757"/>
        <dbReference type="EC" id="1.3.1.98"/>
    </reaction>
</comment>
<comment type="cofactor">
    <cofactor evidence="1">
        <name>FAD</name>
        <dbReference type="ChEBI" id="CHEBI:57692"/>
    </cofactor>
</comment>
<comment type="pathway">
    <text evidence="1">Cell wall biogenesis; peptidoglycan biosynthesis.</text>
</comment>
<comment type="subcellular location">
    <subcellularLocation>
        <location evidence="1">Cytoplasm</location>
    </subcellularLocation>
</comment>
<comment type="similarity">
    <text evidence="1">Belongs to the MurB family.</text>
</comment>
<protein>
    <recommendedName>
        <fullName evidence="1">UDP-N-acetylenolpyruvoylglucosamine reductase</fullName>
        <ecNumber evidence="1">1.3.1.98</ecNumber>
    </recommendedName>
    <alternativeName>
        <fullName evidence="1">UDP-N-acetylmuramate dehydrogenase</fullName>
    </alternativeName>
</protein>
<gene>
    <name evidence="1" type="primary">murB</name>
    <name type="ordered locus">ABC3971</name>
</gene>
<dbReference type="EC" id="1.3.1.98" evidence="1"/>
<dbReference type="EMBL" id="AP006627">
    <property type="protein sequence ID" value="BAD66502.1"/>
    <property type="molecule type" value="Genomic_DNA"/>
</dbReference>
<dbReference type="SMR" id="Q5WAV8"/>
<dbReference type="STRING" id="66692.ABC3971"/>
<dbReference type="KEGG" id="bcl:ABC3971"/>
<dbReference type="eggNOG" id="COG0812">
    <property type="taxonomic scope" value="Bacteria"/>
</dbReference>
<dbReference type="HOGENOM" id="CLU_035304_1_1_9"/>
<dbReference type="UniPathway" id="UPA00219"/>
<dbReference type="Proteomes" id="UP000001168">
    <property type="component" value="Chromosome"/>
</dbReference>
<dbReference type="GO" id="GO:0005829">
    <property type="term" value="C:cytosol"/>
    <property type="evidence" value="ECO:0007669"/>
    <property type="project" value="TreeGrafter"/>
</dbReference>
<dbReference type="GO" id="GO:0071949">
    <property type="term" value="F:FAD binding"/>
    <property type="evidence" value="ECO:0007669"/>
    <property type="project" value="InterPro"/>
</dbReference>
<dbReference type="GO" id="GO:0008762">
    <property type="term" value="F:UDP-N-acetylmuramate dehydrogenase activity"/>
    <property type="evidence" value="ECO:0007669"/>
    <property type="project" value="UniProtKB-UniRule"/>
</dbReference>
<dbReference type="GO" id="GO:0051301">
    <property type="term" value="P:cell division"/>
    <property type="evidence" value="ECO:0007669"/>
    <property type="project" value="UniProtKB-KW"/>
</dbReference>
<dbReference type="GO" id="GO:0071555">
    <property type="term" value="P:cell wall organization"/>
    <property type="evidence" value="ECO:0007669"/>
    <property type="project" value="UniProtKB-KW"/>
</dbReference>
<dbReference type="GO" id="GO:0009252">
    <property type="term" value="P:peptidoglycan biosynthetic process"/>
    <property type="evidence" value="ECO:0007669"/>
    <property type="project" value="UniProtKB-UniRule"/>
</dbReference>
<dbReference type="GO" id="GO:0008360">
    <property type="term" value="P:regulation of cell shape"/>
    <property type="evidence" value="ECO:0007669"/>
    <property type="project" value="UniProtKB-KW"/>
</dbReference>
<dbReference type="FunFam" id="3.90.78.10:FF:000001">
    <property type="entry name" value="UDP-N-acetylenolpyruvoylglucosamine reductase"/>
    <property type="match status" value="1"/>
</dbReference>
<dbReference type="Gene3D" id="3.30.465.10">
    <property type="match status" value="1"/>
</dbReference>
<dbReference type="Gene3D" id="3.90.78.10">
    <property type="entry name" value="UDP-N-acetylenolpyruvoylglucosamine reductase, C-terminal domain"/>
    <property type="match status" value="1"/>
</dbReference>
<dbReference type="Gene3D" id="3.30.43.10">
    <property type="entry name" value="Uridine Diphospho-n-acetylenolpyruvylglucosamine Reductase, domain 2"/>
    <property type="match status" value="1"/>
</dbReference>
<dbReference type="HAMAP" id="MF_00037">
    <property type="entry name" value="MurB"/>
    <property type="match status" value="1"/>
</dbReference>
<dbReference type="InterPro" id="IPR016166">
    <property type="entry name" value="FAD-bd_PCMH"/>
</dbReference>
<dbReference type="InterPro" id="IPR036318">
    <property type="entry name" value="FAD-bd_PCMH-like_sf"/>
</dbReference>
<dbReference type="InterPro" id="IPR016167">
    <property type="entry name" value="FAD-bd_PCMH_sub1"/>
</dbReference>
<dbReference type="InterPro" id="IPR016169">
    <property type="entry name" value="FAD-bd_PCMH_sub2"/>
</dbReference>
<dbReference type="InterPro" id="IPR003170">
    <property type="entry name" value="MurB"/>
</dbReference>
<dbReference type="InterPro" id="IPR011601">
    <property type="entry name" value="MurB_C"/>
</dbReference>
<dbReference type="InterPro" id="IPR036635">
    <property type="entry name" value="MurB_C_sf"/>
</dbReference>
<dbReference type="InterPro" id="IPR006094">
    <property type="entry name" value="Oxid_FAD_bind_N"/>
</dbReference>
<dbReference type="NCBIfam" id="TIGR00179">
    <property type="entry name" value="murB"/>
    <property type="match status" value="1"/>
</dbReference>
<dbReference type="NCBIfam" id="NF010480">
    <property type="entry name" value="PRK13905.1"/>
    <property type="match status" value="1"/>
</dbReference>
<dbReference type="PANTHER" id="PTHR21071">
    <property type="entry name" value="UDP-N-ACETYLENOLPYRUVOYLGLUCOSAMINE REDUCTASE"/>
    <property type="match status" value="1"/>
</dbReference>
<dbReference type="PANTHER" id="PTHR21071:SF4">
    <property type="entry name" value="UDP-N-ACETYLENOLPYRUVOYLGLUCOSAMINE REDUCTASE"/>
    <property type="match status" value="1"/>
</dbReference>
<dbReference type="Pfam" id="PF01565">
    <property type="entry name" value="FAD_binding_4"/>
    <property type="match status" value="1"/>
</dbReference>
<dbReference type="Pfam" id="PF02873">
    <property type="entry name" value="MurB_C"/>
    <property type="match status" value="1"/>
</dbReference>
<dbReference type="SUPFAM" id="SSF56176">
    <property type="entry name" value="FAD-binding/transporter-associated domain-like"/>
    <property type="match status" value="1"/>
</dbReference>
<dbReference type="SUPFAM" id="SSF56194">
    <property type="entry name" value="Uridine diphospho-N-Acetylenolpyruvylglucosamine reductase, MurB, C-terminal domain"/>
    <property type="match status" value="1"/>
</dbReference>
<dbReference type="PROSITE" id="PS51387">
    <property type="entry name" value="FAD_PCMH"/>
    <property type="match status" value="1"/>
</dbReference>
<accession>Q5WAV8</accession>
<name>MURB_SHOC1</name>
<keyword id="KW-0131">Cell cycle</keyword>
<keyword id="KW-0132">Cell division</keyword>
<keyword id="KW-0133">Cell shape</keyword>
<keyword id="KW-0961">Cell wall biogenesis/degradation</keyword>
<keyword id="KW-0963">Cytoplasm</keyword>
<keyword id="KW-0274">FAD</keyword>
<keyword id="KW-0285">Flavoprotein</keyword>
<keyword id="KW-0521">NADP</keyword>
<keyword id="KW-0560">Oxidoreductase</keyword>
<keyword id="KW-0573">Peptidoglycan synthesis</keyword>
<keyword id="KW-1185">Reference proteome</keyword>
<feature type="chain" id="PRO_0000224658" description="UDP-N-acetylenolpyruvoylglucosamine reductase">
    <location>
        <begin position="1"/>
        <end position="311"/>
    </location>
</feature>
<feature type="domain" description="FAD-binding PCMH-type" evidence="1">
    <location>
        <begin position="34"/>
        <end position="198"/>
    </location>
</feature>
<feature type="active site" evidence="1">
    <location>
        <position position="177"/>
    </location>
</feature>
<feature type="active site" description="Proton donor" evidence="1">
    <location>
        <position position="227"/>
    </location>
</feature>
<feature type="active site" evidence="1">
    <location>
        <position position="297"/>
    </location>
</feature>
<proteinExistence type="inferred from homology"/>
<sequence>MKRYIEICKPLWTLLPEGTIHEDERLCKHTYTQMGGAADLFITPQSYEETQTVLKFAHEHRVPVTLLGNGSNVIVKDGGIRGITLSLKKLNTITCTGVELVAQTGATIIEASRRARDAELTGLEFACGIPGTVGGAFYMNAGAYGGQIADVLESVLVLTEQGEFKTLSKEEFDFDYRKSVFSAKRYIALEGTFRLQKGDMAQIQAKMDELTIARETKQPLEYPSCGSVFKRPPGMFAGKLIQDSGLQGTRIGGAEVSKKHAGFIVNVDNATATEYMSLVRHVQQTVKDKFGVELETEVITIGEDIEEPVSD</sequence>
<evidence type="ECO:0000255" key="1">
    <source>
        <dbReference type="HAMAP-Rule" id="MF_00037"/>
    </source>
</evidence>
<reference key="1">
    <citation type="submission" date="2003-10" db="EMBL/GenBank/DDBJ databases">
        <title>The complete genome sequence of the alkaliphilic Bacillus clausii KSM-K16.</title>
        <authorList>
            <person name="Takaki Y."/>
            <person name="Kageyama Y."/>
            <person name="Shimamura S."/>
            <person name="Suzuki H."/>
            <person name="Nishi S."/>
            <person name="Hatada Y."/>
            <person name="Kawai S."/>
            <person name="Ito S."/>
            <person name="Horikoshi K."/>
        </authorList>
    </citation>
    <scope>NUCLEOTIDE SEQUENCE [LARGE SCALE GENOMIC DNA]</scope>
    <source>
        <strain>KSM-K16</strain>
    </source>
</reference>
<organism>
    <name type="scientific">Shouchella clausii (strain KSM-K16)</name>
    <name type="common">Alkalihalobacillus clausii</name>
    <dbReference type="NCBI Taxonomy" id="66692"/>
    <lineage>
        <taxon>Bacteria</taxon>
        <taxon>Bacillati</taxon>
        <taxon>Bacillota</taxon>
        <taxon>Bacilli</taxon>
        <taxon>Bacillales</taxon>
        <taxon>Bacillaceae</taxon>
        <taxon>Shouchella</taxon>
    </lineage>
</organism>